<keyword id="KW-0025">Alternative splicing</keyword>
<keyword id="KW-0597">Phosphoprotein</keyword>
<keyword id="KW-1185">Reference proteome</keyword>
<keyword id="KW-0687">Ribonucleoprotein</keyword>
<keyword id="KW-0689">Ribosomal protein</keyword>
<feature type="chain" id="PRO_0000157660" description="Large ribosomal subunit protein P2z">
    <location>
        <begin position="1"/>
        <end position="115"/>
    </location>
</feature>
<feature type="region of interest" description="Disordered" evidence="3">
    <location>
        <begin position="62"/>
        <end position="115"/>
    </location>
</feature>
<feature type="compositionally biased region" description="Basic and acidic residues" evidence="3">
    <location>
        <begin position="92"/>
        <end position="102"/>
    </location>
</feature>
<feature type="modified residue" description="Phosphoserine" evidence="2">
    <location>
        <position position="105"/>
    </location>
</feature>
<feature type="sequence conflict" description="In Ref. 5; CAA81313." evidence="5" ref="5">
    <original>L</original>
    <variation>V</variation>
    <location>
        <position position="42"/>
    </location>
</feature>
<feature type="sequence conflict" description="In Ref. 5; CAA81313." evidence="5" ref="5">
    <original>G</original>
    <variation>D</variation>
    <location>
        <position position="70"/>
    </location>
</feature>
<protein>
    <recommendedName>
        <fullName evidence="4">Large ribosomal subunit protein P2z</fullName>
    </recommendedName>
    <alternativeName>
        <fullName>60S acidic ribosomal protein P2-1</fullName>
    </alternativeName>
</protein>
<name>RLA21_ARATH</name>
<sequence length="115" mass="11452">MKVVAAFLLAVLSGKASPTTGDIKDILGSVGAETEDSQIELLLKEVKGKDLAELIAAGREKLASVPSGGGGGVAVASATSGGGGGGGAPAAESKKEEKKEEKEESDDDMGFSLFE</sequence>
<reference key="1">
    <citation type="journal article" date="1999" name="Nature">
        <title>Sequence and analysis of chromosome 2 of the plant Arabidopsis thaliana.</title>
        <authorList>
            <person name="Lin X."/>
            <person name="Kaul S."/>
            <person name="Rounsley S.D."/>
            <person name="Shea T.P."/>
            <person name="Benito M.-I."/>
            <person name="Town C.D."/>
            <person name="Fujii C.Y."/>
            <person name="Mason T.M."/>
            <person name="Bowman C.L."/>
            <person name="Barnstead M.E."/>
            <person name="Feldblyum T.V."/>
            <person name="Buell C.R."/>
            <person name="Ketchum K.A."/>
            <person name="Lee J.J."/>
            <person name="Ronning C.M."/>
            <person name="Koo H.L."/>
            <person name="Moffat K.S."/>
            <person name="Cronin L.A."/>
            <person name="Shen M."/>
            <person name="Pai G."/>
            <person name="Van Aken S."/>
            <person name="Umayam L."/>
            <person name="Tallon L.J."/>
            <person name="Gill J.E."/>
            <person name="Adams M.D."/>
            <person name="Carrera A.J."/>
            <person name="Creasy T.H."/>
            <person name="Goodman H.M."/>
            <person name="Somerville C.R."/>
            <person name="Copenhaver G.P."/>
            <person name="Preuss D."/>
            <person name="Nierman W.C."/>
            <person name="White O."/>
            <person name="Eisen J.A."/>
            <person name="Salzberg S.L."/>
            <person name="Fraser C.M."/>
            <person name="Venter J.C."/>
        </authorList>
    </citation>
    <scope>NUCLEOTIDE SEQUENCE [LARGE SCALE GENOMIC DNA]</scope>
    <source>
        <strain>cv. Columbia</strain>
    </source>
</reference>
<reference key="2">
    <citation type="journal article" date="2017" name="Plant J.">
        <title>Araport11: a complete reannotation of the Arabidopsis thaliana reference genome.</title>
        <authorList>
            <person name="Cheng C.Y."/>
            <person name="Krishnakumar V."/>
            <person name="Chan A.P."/>
            <person name="Thibaud-Nissen F."/>
            <person name="Schobel S."/>
            <person name="Town C.D."/>
        </authorList>
    </citation>
    <scope>GENOME REANNOTATION</scope>
    <source>
        <strain>cv. Columbia</strain>
    </source>
</reference>
<reference key="3">
    <citation type="journal article" date="2003" name="Science">
        <title>Empirical analysis of transcriptional activity in the Arabidopsis genome.</title>
        <authorList>
            <person name="Yamada K."/>
            <person name="Lim J."/>
            <person name="Dale J.M."/>
            <person name="Chen H."/>
            <person name="Shinn P."/>
            <person name="Palm C.J."/>
            <person name="Southwick A.M."/>
            <person name="Wu H.C."/>
            <person name="Kim C.J."/>
            <person name="Nguyen M."/>
            <person name="Pham P.K."/>
            <person name="Cheuk R.F."/>
            <person name="Karlin-Newmann G."/>
            <person name="Liu S.X."/>
            <person name="Lam B."/>
            <person name="Sakano H."/>
            <person name="Wu T."/>
            <person name="Yu G."/>
            <person name="Miranda M."/>
            <person name="Quach H.L."/>
            <person name="Tripp M."/>
            <person name="Chang C.H."/>
            <person name="Lee J.M."/>
            <person name="Toriumi M.J."/>
            <person name="Chan M.M."/>
            <person name="Tang C.C."/>
            <person name="Onodera C.S."/>
            <person name="Deng J.M."/>
            <person name="Akiyama K."/>
            <person name="Ansari Y."/>
            <person name="Arakawa T."/>
            <person name="Banh J."/>
            <person name="Banno F."/>
            <person name="Bowser L."/>
            <person name="Brooks S.Y."/>
            <person name="Carninci P."/>
            <person name="Chao Q."/>
            <person name="Choy N."/>
            <person name="Enju A."/>
            <person name="Goldsmith A.D."/>
            <person name="Gurjal M."/>
            <person name="Hansen N.F."/>
            <person name="Hayashizaki Y."/>
            <person name="Johnson-Hopson C."/>
            <person name="Hsuan V.W."/>
            <person name="Iida K."/>
            <person name="Karnes M."/>
            <person name="Khan S."/>
            <person name="Koesema E."/>
            <person name="Ishida J."/>
            <person name="Jiang P.X."/>
            <person name="Jones T."/>
            <person name="Kawai J."/>
            <person name="Kamiya A."/>
            <person name="Meyers C."/>
            <person name="Nakajima M."/>
            <person name="Narusaka M."/>
            <person name="Seki M."/>
            <person name="Sakurai T."/>
            <person name="Satou M."/>
            <person name="Tamse R."/>
            <person name="Vaysberg M."/>
            <person name="Wallender E.K."/>
            <person name="Wong C."/>
            <person name="Yamamura Y."/>
            <person name="Yuan S."/>
            <person name="Shinozaki K."/>
            <person name="Davis R.W."/>
            <person name="Theologis A."/>
            <person name="Ecker J.R."/>
        </authorList>
    </citation>
    <scope>NUCLEOTIDE SEQUENCE [LARGE SCALE MRNA]</scope>
    <source>
        <strain>cv. Columbia</strain>
    </source>
</reference>
<reference key="4">
    <citation type="submission" date="2002-03" db="EMBL/GenBank/DDBJ databases">
        <title>Full-length cDNA from Arabidopsis thaliana.</title>
        <authorList>
            <person name="Brover V.V."/>
            <person name="Troukhan M.E."/>
            <person name="Alexandrov N.A."/>
            <person name="Lu Y.-P."/>
            <person name="Flavell R.B."/>
            <person name="Feldmann K.A."/>
        </authorList>
    </citation>
    <scope>NUCLEOTIDE SEQUENCE [LARGE SCALE MRNA]</scope>
</reference>
<reference key="5">
    <citation type="journal article" date="1996" name="Plant J.">
        <title>Further progress towards a catalogue of all Arabidopsis genes: analysis of a set of 5000 non-redundant ESTs.</title>
        <authorList>
            <person name="Cooke R."/>
            <person name="Raynal M."/>
            <person name="Laudie M."/>
            <person name="Grellet F."/>
            <person name="Delseny M."/>
            <person name="Morris P.-C."/>
            <person name="Guerrier D."/>
            <person name="Giraudat J."/>
            <person name="Quigley F."/>
            <person name="Clabault G."/>
            <person name="Li Y.-F."/>
            <person name="Mache R."/>
            <person name="Krivitzky M."/>
            <person name="Gy I.J.-J."/>
            <person name="Kreis M."/>
            <person name="Lecharny A."/>
            <person name="Parmentier Y."/>
            <person name="Marbach J."/>
            <person name="Fleck J."/>
            <person name="Clement B."/>
            <person name="Philipps G."/>
            <person name="Herve C."/>
            <person name="Bardet C."/>
            <person name="Tremousaygue D."/>
            <person name="Lescure B."/>
            <person name="Lacomme C."/>
            <person name="Roby D."/>
            <person name="Jourjon M.-F."/>
            <person name="Chabrier P."/>
            <person name="Charpenteau J.-L."/>
            <person name="Desprez T."/>
            <person name="Amselem J."/>
            <person name="Chiapello H."/>
            <person name="Hoefte H."/>
        </authorList>
    </citation>
    <scope>NUCLEOTIDE SEQUENCE [LARGE SCALE MRNA] OF 38-115</scope>
    <source>
        <strain>cv. Columbia</strain>
        <tissue>Seedling</tissue>
    </source>
</reference>
<reference key="6">
    <citation type="journal article" date="2001" name="Plant Physiol.">
        <title>The organization of cytoplasmic ribosomal protein genes in the Arabidopsis genome.</title>
        <authorList>
            <person name="Barakat A."/>
            <person name="Szick-Miranda K."/>
            <person name="Chang I.-F."/>
            <person name="Guyot R."/>
            <person name="Blanc G."/>
            <person name="Cooke R."/>
            <person name="Delseny M."/>
            <person name="Bailey-Serres J."/>
        </authorList>
    </citation>
    <scope>GENE FAMILY ORGANIZATION</scope>
    <scope>NOMENCLATURE</scope>
</reference>
<reference key="7">
    <citation type="journal article" date="2023" name="Plant Cell">
        <title>An updated nomenclature for plant ribosomal protein genes.</title>
        <authorList>
            <person name="Scarpin M.R."/>
            <person name="Busche M."/>
            <person name="Martinez R.E."/>
            <person name="Harper L.C."/>
            <person name="Reiser L."/>
            <person name="Szakonyi D."/>
            <person name="Merchante C."/>
            <person name="Lan T."/>
            <person name="Xiong W."/>
            <person name="Mo B."/>
            <person name="Tang G."/>
            <person name="Chen X."/>
            <person name="Bailey-Serres J."/>
            <person name="Browning K.S."/>
            <person name="Brunkard J.O."/>
        </authorList>
    </citation>
    <scope>NOMENCLATURE</scope>
</reference>
<proteinExistence type="inferred from homology"/>
<comment type="function">
    <text>Plays an important role in the elongation step of protein synthesis.</text>
</comment>
<comment type="subunit">
    <text>P1 and P2 exist as dimers at the large ribosomal subunit.</text>
</comment>
<comment type="alternative products">
    <event type="alternative splicing"/>
    <isoform>
        <id>P51407-1</id>
        <name>1</name>
        <sequence type="displayed"/>
    </isoform>
    <text>A number of isoforms are produced. According to EST sequences.</text>
</comment>
<comment type="PTM">
    <text evidence="1">Phosphorylated.</text>
</comment>
<comment type="similarity">
    <text evidence="5">Belongs to the eukaryotic ribosomal protein P1/P2 family.</text>
</comment>
<dbReference type="EMBL" id="AC005824">
    <property type="protein sequence ID" value="AAC73028.1"/>
    <property type="molecule type" value="Genomic_DNA"/>
</dbReference>
<dbReference type="EMBL" id="CP002685">
    <property type="protein sequence ID" value="AEC08033.1"/>
    <property type="molecule type" value="Genomic_DNA"/>
</dbReference>
<dbReference type="EMBL" id="AF410295">
    <property type="protein sequence ID" value="AAK95281.1"/>
    <property type="molecule type" value="mRNA"/>
</dbReference>
<dbReference type="EMBL" id="AY093717">
    <property type="protein sequence ID" value="AAM10341.1"/>
    <property type="molecule type" value="mRNA"/>
</dbReference>
<dbReference type="EMBL" id="AY085945">
    <property type="protein sequence ID" value="AAM63156.1"/>
    <property type="molecule type" value="mRNA"/>
</dbReference>
<dbReference type="EMBL" id="Z26542">
    <property type="protein sequence ID" value="CAA81313.1"/>
    <property type="molecule type" value="mRNA"/>
</dbReference>
<dbReference type="PIR" id="B84676">
    <property type="entry name" value="B84676"/>
</dbReference>
<dbReference type="RefSeq" id="NP_180340.1">
    <molecule id="P51407-1"/>
    <property type="nucleotide sequence ID" value="NM_128331.4"/>
</dbReference>
<dbReference type="SMR" id="P51407"/>
<dbReference type="BioGRID" id="2668">
    <property type="interactions" value="44"/>
</dbReference>
<dbReference type="FunCoup" id="P51407">
    <property type="interactions" value="2321"/>
</dbReference>
<dbReference type="STRING" id="3702.P51407"/>
<dbReference type="iPTMnet" id="P51407"/>
<dbReference type="MetOSite" id="P51407"/>
<dbReference type="ProteomicsDB" id="228133">
    <molecule id="P51407-1"/>
</dbReference>
<dbReference type="EnsemblPlants" id="AT2G27720.1">
    <molecule id="P51407-1"/>
    <property type="protein sequence ID" value="AT2G27720.1"/>
    <property type="gene ID" value="AT2G27720"/>
</dbReference>
<dbReference type="GeneID" id="817318"/>
<dbReference type="Gramene" id="AT2G27720.1">
    <molecule id="P51407-1"/>
    <property type="protein sequence ID" value="AT2G27720.1"/>
    <property type="gene ID" value="AT2G27720"/>
</dbReference>
<dbReference type="KEGG" id="ath:AT2G27720"/>
<dbReference type="Araport" id="AT2G27720"/>
<dbReference type="TAIR" id="AT2G27720"/>
<dbReference type="HOGENOM" id="CLU_114656_0_0_1"/>
<dbReference type="InParanoid" id="P51407"/>
<dbReference type="OMA" id="THIVFPY"/>
<dbReference type="PhylomeDB" id="P51407"/>
<dbReference type="CD-CODE" id="4299E36E">
    <property type="entry name" value="Nucleolus"/>
</dbReference>
<dbReference type="PRO" id="PR:P51407"/>
<dbReference type="Proteomes" id="UP000006548">
    <property type="component" value="Chromosome 2"/>
</dbReference>
<dbReference type="ExpressionAtlas" id="P51407">
    <property type="expression patterns" value="baseline and differential"/>
</dbReference>
<dbReference type="GO" id="GO:0022625">
    <property type="term" value="C:cytosolic large ribosomal subunit"/>
    <property type="evidence" value="ECO:0007669"/>
    <property type="project" value="InterPro"/>
</dbReference>
<dbReference type="GO" id="GO:0003735">
    <property type="term" value="F:structural constituent of ribosome"/>
    <property type="evidence" value="ECO:0007669"/>
    <property type="project" value="InterPro"/>
</dbReference>
<dbReference type="GO" id="GO:0002182">
    <property type="term" value="P:cytoplasmic translational elongation"/>
    <property type="evidence" value="ECO:0007669"/>
    <property type="project" value="InterPro"/>
</dbReference>
<dbReference type="CDD" id="cd05833">
    <property type="entry name" value="Ribosomal_P2"/>
    <property type="match status" value="1"/>
</dbReference>
<dbReference type="FunFam" id="1.10.10.1410:FF:000002">
    <property type="entry name" value="60S acidic ribosomal protein P2"/>
    <property type="match status" value="1"/>
</dbReference>
<dbReference type="Gene3D" id="1.10.10.1410">
    <property type="match status" value="1"/>
</dbReference>
<dbReference type="HAMAP" id="MF_01478">
    <property type="entry name" value="Ribosomal_L12_arch"/>
    <property type="match status" value="1"/>
</dbReference>
<dbReference type="InterPro" id="IPR038716">
    <property type="entry name" value="P1/P2_N_sf"/>
</dbReference>
<dbReference type="InterPro" id="IPR027534">
    <property type="entry name" value="Ribosomal_P1/P2"/>
</dbReference>
<dbReference type="InterPro" id="IPR044076">
    <property type="entry name" value="Ribosomal_P2"/>
</dbReference>
<dbReference type="PANTHER" id="PTHR21141">
    <property type="entry name" value="60S ACIDIC RIBOSOMAL PROTEIN FAMILY MEMBER"/>
    <property type="match status" value="1"/>
</dbReference>
<dbReference type="PANTHER" id="PTHR21141:SF114">
    <property type="entry name" value="LARGE RIBOSOMAL SUBUNIT PROTEIN P2Z"/>
    <property type="match status" value="1"/>
</dbReference>
<dbReference type="Pfam" id="PF00428">
    <property type="entry name" value="Ribosomal_60s"/>
    <property type="match status" value="1"/>
</dbReference>
<evidence type="ECO:0000250" key="1"/>
<evidence type="ECO:0000250" key="2">
    <source>
        <dbReference type="UniProtKB" id="Q9LH85"/>
    </source>
</evidence>
<evidence type="ECO:0000256" key="3">
    <source>
        <dbReference type="SAM" id="MobiDB-lite"/>
    </source>
</evidence>
<evidence type="ECO:0000303" key="4">
    <source>
    </source>
</evidence>
<evidence type="ECO:0000305" key="5"/>
<gene>
    <name type="primary">RPP2A</name>
    <name type="ordered locus">At2g27720</name>
    <name type="ORF">F15K20.18</name>
</gene>
<accession>P51407</accession>
<accession>Q9ZUX3</accession>
<organism>
    <name type="scientific">Arabidopsis thaliana</name>
    <name type="common">Mouse-ear cress</name>
    <dbReference type="NCBI Taxonomy" id="3702"/>
    <lineage>
        <taxon>Eukaryota</taxon>
        <taxon>Viridiplantae</taxon>
        <taxon>Streptophyta</taxon>
        <taxon>Embryophyta</taxon>
        <taxon>Tracheophyta</taxon>
        <taxon>Spermatophyta</taxon>
        <taxon>Magnoliopsida</taxon>
        <taxon>eudicotyledons</taxon>
        <taxon>Gunneridae</taxon>
        <taxon>Pentapetalae</taxon>
        <taxon>rosids</taxon>
        <taxon>malvids</taxon>
        <taxon>Brassicales</taxon>
        <taxon>Brassicaceae</taxon>
        <taxon>Camelineae</taxon>
        <taxon>Arabidopsis</taxon>
    </lineage>
</organism>